<name>NDK_CORDI</name>
<gene>
    <name evidence="1" type="primary">ndk</name>
    <name type="ordered locus">DIP1783</name>
</gene>
<keyword id="KW-0067">ATP-binding</keyword>
<keyword id="KW-0963">Cytoplasm</keyword>
<keyword id="KW-0418">Kinase</keyword>
<keyword id="KW-0460">Magnesium</keyword>
<keyword id="KW-0479">Metal-binding</keyword>
<keyword id="KW-0546">Nucleotide metabolism</keyword>
<keyword id="KW-0547">Nucleotide-binding</keyword>
<keyword id="KW-0597">Phosphoprotein</keyword>
<keyword id="KW-1185">Reference proteome</keyword>
<keyword id="KW-0808">Transferase</keyword>
<sequence>MTERTLILIKPDGVERGLIGEIIARIERKGLKISALDLRVADRETAEKHYAEHADKPFFGELVNFITSAPLIAGVVEGPRAIEAWRQLAGGTDPVAKATPGTIRGDFALEVSTNVVHGSDSPESAEREISIWFPNL</sequence>
<dbReference type="EC" id="2.7.4.6" evidence="1"/>
<dbReference type="EMBL" id="BX248359">
    <property type="protein sequence ID" value="CAE50313.1"/>
    <property type="status" value="ALT_INIT"/>
    <property type="molecule type" value="Genomic_DNA"/>
</dbReference>
<dbReference type="RefSeq" id="WP_003852467.1">
    <property type="nucleotide sequence ID" value="NC_002935.2"/>
</dbReference>
<dbReference type="SMR" id="Q6NFV3"/>
<dbReference type="STRING" id="257309.DIP1783"/>
<dbReference type="KEGG" id="cdi:DIP1783"/>
<dbReference type="HOGENOM" id="CLU_060216_6_3_11"/>
<dbReference type="Proteomes" id="UP000002198">
    <property type="component" value="Chromosome"/>
</dbReference>
<dbReference type="GO" id="GO:0005737">
    <property type="term" value="C:cytoplasm"/>
    <property type="evidence" value="ECO:0007669"/>
    <property type="project" value="UniProtKB-SubCell"/>
</dbReference>
<dbReference type="GO" id="GO:0005524">
    <property type="term" value="F:ATP binding"/>
    <property type="evidence" value="ECO:0007669"/>
    <property type="project" value="UniProtKB-UniRule"/>
</dbReference>
<dbReference type="GO" id="GO:0046872">
    <property type="term" value="F:metal ion binding"/>
    <property type="evidence" value="ECO:0007669"/>
    <property type="project" value="UniProtKB-KW"/>
</dbReference>
<dbReference type="GO" id="GO:0004550">
    <property type="term" value="F:nucleoside diphosphate kinase activity"/>
    <property type="evidence" value="ECO:0007669"/>
    <property type="project" value="UniProtKB-UniRule"/>
</dbReference>
<dbReference type="GO" id="GO:0006241">
    <property type="term" value="P:CTP biosynthetic process"/>
    <property type="evidence" value="ECO:0007669"/>
    <property type="project" value="UniProtKB-UniRule"/>
</dbReference>
<dbReference type="GO" id="GO:0006183">
    <property type="term" value="P:GTP biosynthetic process"/>
    <property type="evidence" value="ECO:0007669"/>
    <property type="project" value="UniProtKB-UniRule"/>
</dbReference>
<dbReference type="GO" id="GO:0006228">
    <property type="term" value="P:UTP biosynthetic process"/>
    <property type="evidence" value="ECO:0007669"/>
    <property type="project" value="UniProtKB-UniRule"/>
</dbReference>
<dbReference type="CDD" id="cd04413">
    <property type="entry name" value="NDPk_I"/>
    <property type="match status" value="1"/>
</dbReference>
<dbReference type="FunFam" id="3.30.70.141:FF:000003">
    <property type="entry name" value="Nucleoside diphosphate kinase"/>
    <property type="match status" value="1"/>
</dbReference>
<dbReference type="Gene3D" id="3.30.70.141">
    <property type="entry name" value="Nucleoside diphosphate kinase-like domain"/>
    <property type="match status" value="1"/>
</dbReference>
<dbReference type="HAMAP" id="MF_00451">
    <property type="entry name" value="NDP_kinase"/>
    <property type="match status" value="1"/>
</dbReference>
<dbReference type="InterPro" id="IPR034907">
    <property type="entry name" value="NDK-like_dom"/>
</dbReference>
<dbReference type="InterPro" id="IPR036850">
    <property type="entry name" value="NDK-like_dom_sf"/>
</dbReference>
<dbReference type="InterPro" id="IPR001564">
    <property type="entry name" value="Nucleoside_diP_kinase"/>
</dbReference>
<dbReference type="InterPro" id="IPR023005">
    <property type="entry name" value="Nucleoside_diP_kinase_AS"/>
</dbReference>
<dbReference type="NCBIfam" id="NF001908">
    <property type="entry name" value="PRK00668.1"/>
    <property type="match status" value="1"/>
</dbReference>
<dbReference type="PANTHER" id="PTHR11349">
    <property type="entry name" value="NUCLEOSIDE DIPHOSPHATE KINASE"/>
    <property type="match status" value="1"/>
</dbReference>
<dbReference type="Pfam" id="PF00334">
    <property type="entry name" value="NDK"/>
    <property type="match status" value="1"/>
</dbReference>
<dbReference type="PRINTS" id="PR01243">
    <property type="entry name" value="NUCDPKINASE"/>
</dbReference>
<dbReference type="SMART" id="SM00562">
    <property type="entry name" value="NDK"/>
    <property type="match status" value="1"/>
</dbReference>
<dbReference type="SUPFAM" id="SSF54919">
    <property type="entry name" value="Nucleoside diphosphate kinase, NDK"/>
    <property type="match status" value="1"/>
</dbReference>
<dbReference type="PROSITE" id="PS00469">
    <property type="entry name" value="NDPK"/>
    <property type="match status" value="1"/>
</dbReference>
<dbReference type="PROSITE" id="PS51374">
    <property type="entry name" value="NDPK_LIKE"/>
    <property type="match status" value="1"/>
</dbReference>
<reference key="1">
    <citation type="journal article" date="2003" name="Nucleic Acids Res.">
        <title>The complete genome sequence and analysis of Corynebacterium diphtheriae NCTC13129.</title>
        <authorList>
            <person name="Cerdeno-Tarraga A.-M."/>
            <person name="Efstratiou A."/>
            <person name="Dover L.G."/>
            <person name="Holden M.T.G."/>
            <person name="Pallen M.J."/>
            <person name="Bentley S.D."/>
            <person name="Besra G.S."/>
            <person name="Churcher C.M."/>
            <person name="James K.D."/>
            <person name="De Zoysa A."/>
            <person name="Chillingworth T."/>
            <person name="Cronin A."/>
            <person name="Dowd L."/>
            <person name="Feltwell T."/>
            <person name="Hamlin N."/>
            <person name="Holroyd S."/>
            <person name="Jagels K."/>
            <person name="Moule S."/>
            <person name="Quail M.A."/>
            <person name="Rabbinowitsch E."/>
            <person name="Rutherford K.M."/>
            <person name="Thomson N.R."/>
            <person name="Unwin L."/>
            <person name="Whitehead S."/>
            <person name="Barrell B.G."/>
            <person name="Parkhill J."/>
        </authorList>
    </citation>
    <scope>NUCLEOTIDE SEQUENCE [LARGE SCALE GENOMIC DNA]</scope>
    <source>
        <strain>ATCC 700971 / NCTC 13129 / Biotype gravis</strain>
    </source>
</reference>
<proteinExistence type="inferred from homology"/>
<protein>
    <recommendedName>
        <fullName evidence="1">Nucleoside diphosphate kinase</fullName>
        <shortName evidence="1">NDK</shortName>
        <shortName evidence="1">NDP kinase</shortName>
        <ecNumber evidence="1">2.7.4.6</ecNumber>
    </recommendedName>
    <alternativeName>
        <fullName evidence="1">Nucleoside-2-P kinase</fullName>
    </alternativeName>
</protein>
<comment type="function">
    <text evidence="1">Major role in the synthesis of nucleoside triphosphates other than ATP. The ATP gamma phosphate is transferred to the NDP beta phosphate via a ping-pong mechanism, using a phosphorylated active-site intermediate.</text>
</comment>
<comment type="catalytic activity">
    <reaction evidence="1">
        <text>a 2'-deoxyribonucleoside 5'-diphosphate + ATP = a 2'-deoxyribonucleoside 5'-triphosphate + ADP</text>
        <dbReference type="Rhea" id="RHEA:44640"/>
        <dbReference type="ChEBI" id="CHEBI:30616"/>
        <dbReference type="ChEBI" id="CHEBI:61560"/>
        <dbReference type="ChEBI" id="CHEBI:73316"/>
        <dbReference type="ChEBI" id="CHEBI:456216"/>
        <dbReference type="EC" id="2.7.4.6"/>
    </reaction>
</comment>
<comment type="catalytic activity">
    <reaction evidence="1">
        <text>a ribonucleoside 5'-diphosphate + ATP = a ribonucleoside 5'-triphosphate + ADP</text>
        <dbReference type="Rhea" id="RHEA:18113"/>
        <dbReference type="ChEBI" id="CHEBI:30616"/>
        <dbReference type="ChEBI" id="CHEBI:57930"/>
        <dbReference type="ChEBI" id="CHEBI:61557"/>
        <dbReference type="ChEBI" id="CHEBI:456216"/>
        <dbReference type="EC" id="2.7.4.6"/>
    </reaction>
</comment>
<comment type="cofactor">
    <cofactor evidence="1">
        <name>Mg(2+)</name>
        <dbReference type="ChEBI" id="CHEBI:18420"/>
    </cofactor>
</comment>
<comment type="subunit">
    <text evidence="1">Homotetramer.</text>
</comment>
<comment type="subcellular location">
    <subcellularLocation>
        <location evidence="1">Cytoplasm</location>
    </subcellularLocation>
</comment>
<comment type="similarity">
    <text evidence="1">Belongs to the NDK family.</text>
</comment>
<comment type="sequence caution" evidence="2">
    <conflict type="erroneous initiation">
        <sequence resource="EMBL-CDS" id="CAE50313"/>
    </conflict>
</comment>
<organism>
    <name type="scientific">Corynebacterium diphtheriae (strain ATCC 700971 / NCTC 13129 / Biotype gravis)</name>
    <dbReference type="NCBI Taxonomy" id="257309"/>
    <lineage>
        <taxon>Bacteria</taxon>
        <taxon>Bacillati</taxon>
        <taxon>Actinomycetota</taxon>
        <taxon>Actinomycetes</taxon>
        <taxon>Mycobacteriales</taxon>
        <taxon>Corynebacteriaceae</taxon>
        <taxon>Corynebacterium</taxon>
    </lineage>
</organism>
<feature type="chain" id="PRO_0000136971" description="Nucleoside diphosphate kinase">
    <location>
        <begin position="1"/>
        <end position="136"/>
    </location>
</feature>
<feature type="active site" description="Pros-phosphohistidine intermediate" evidence="1">
    <location>
        <position position="117"/>
    </location>
</feature>
<feature type="binding site" evidence="1">
    <location>
        <position position="10"/>
    </location>
    <ligand>
        <name>ATP</name>
        <dbReference type="ChEBI" id="CHEBI:30616"/>
    </ligand>
</feature>
<feature type="binding site" evidence="1">
    <location>
        <position position="58"/>
    </location>
    <ligand>
        <name>ATP</name>
        <dbReference type="ChEBI" id="CHEBI:30616"/>
    </ligand>
</feature>
<feature type="binding site" evidence="1">
    <location>
        <position position="86"/>
    </location>
    <ligand>
        <name>ATP</name>
        <dbReference type="ChEBI" id="CHEBI:30616"/>
    </ligand>
</feature>
<feature type="binding site" evidence="1">
    <location>
        <position position="92"/>
    </location>
    <ligand>
        <name>ATP</name>
        <dbReference type="ChEBI" id="CHEBI:30616"/>
    </ligand>
</feature>
<feature type="binding site" evidence="1">
    <location>
        <position position="104"/>
    </location>
    <ligand>
        <name>ATP</name>
        <dbReference type="ChEBI" id="CHEBI:30616"/>
    </ligand>
</feature>
<feature type="binding site" evidence="1">
    <location>
        <position position="114"/>
    </location>
    <ligand>
        <name>ATP</name>
        <dbReference type="ChEBI" id="CHEBI:30616"/>
    </ligand>
</feature>
<evidence type="ECO:0000255" key="1">
    <source>
        <dbReference type="HAMAP-Rule" id="MF_00451"/>
    </source>
</evidence>
<evidence type="ECO:0000305" key="2"/>
<accession>Q6NFV3</accession>